<comment type="function">
    <text evidence="1">Catalyzes the attachment of tyrosine to tRNA(Tyr) in a two-step reaction: tyrosine is first activated by ATP to form Tyr-AMP and then transferred to the acceptor end of tRNA(Tyr).</text>
</comment>
<comment type="catalytic activity">
    <reaction evidence="1">
        <text>tRNA(Tyr) + L-tyrosine + ATP = L-tyrosyl-tRNA(Tyr) + AMP + diphosphate + H(+)</text>
        <dbReference type="Rhea" id="RHEA:10220"/>
        <dbReference type="Rhea" id="RHEA-COMP:9706"/>
        <dbReference type="Rhea" id="RHEA-COMP:9707"/>
        <dbReference type="ChEBI" id="CHEBI:15378"/>
        <dbReference type="ChEBI" id="CHEBI:30616"/>
        <dbReference type="ChEBI" id="CHEBI:33019"/>
        <dbReference type="ChEBI" id="CHEBI:58315"/>
        <dbReference type="ChEBI" id="CHEBI:78442"/>
        <dbReference type="ChEBI" id="CHEBI:78536"/>
        <dbReference type="ChEBI" id="CHEBI:456215"/>
        <dbReference type="EC" id="6.1.1.1"/>
    </reaction>
</comment>
<comment type="subunit">
    <text evidence="1">Homodimer.</text>
</comment>
<comment type="subcellular location">
    <subcellularLocation>
        <location evidence="1">Cytoplasm</location>
    </subcellularLocation>
</comment>
<comment type="similarity">
    <text evidence="1">Belongs to the class-I aminoacyl-tRNA synthetase family. TyrS type 1 subfamily.</text>
</comment>
<name>SYY_DECAR</name>
<sequence length="424" mass="46711">MYQSPLIQDLHDRGLIAQITDAAALDKLLTEESVTLYCGFDPTADSLHLGHLVPVLILKRFQEAGHKPIALVGGATGMIGDPSFKATERKLNTPDVIASWVGKIRGQVEPFLKFDGANAAIMANNYDWFGGMNCLEFMRDIGKHFSVNAMIKKESVQQRLTREDQGISYTEFSYSLLQGYDFAELNKRYGCVLQIGGSDQWGNIVAGTDLTRRLHQKHVFGLTLPLITKADGTKFGKTESGAIWLDPKKTSPYAFYQFWLNTSDADVYKFMNFFTFLPVARIAEIEAADKASGTKPEAQRILAEEATRLVHGEVALMAARRITECLFSGQLADLTENDLEQLAQDGMPGVQLEKSNTGLIDALVASGLAKSKSEARTFIQSGSVAINGNKAEALDHAIGGDELLYGRFTILRRGKKNYGLISWQ</sequence>
<protein>
    <recommendedName>
        <fullName evidence="1">Tyrosine--tRNA ligase</fullName>
        <ecNumber evidence="1">6.1.1.1</ecNumber>
    </recommendedName>
    <alternativeName>
        <fullName evidence="1">Tyrosyl-tRNA synthetase</fullName>
        <shortName evidence="1">TyrRS</shortName>
    </alternativeName>
</protein>
<proteinExistence type="inferred from homology"/>
<gene>
    <name evidence="1" type="primary">tyrS</name>
    <name type="ordered locus">Daro_3175</name>
</gene>
<reference key="1">
    <citation type="journal article" date="2009" name="BMC Genomics">
        <title>Metabolic analysis of the soil microbe Dechloromonas aromatica str. RCB: indications of a surprisingly complex life-style and cryptic anaerobic pathways for aromatic degradation.</title>
        <authorList>
            <person name="Salinero K.K."/>
            <person name="Keller K."/>
            <person name="Feil W.S."/>
            <person name="Feil H."/>
            <person name="Trong S."/>
            <person name="Di Bartolo G."/>
            <person name="Lapidus A."/>
        </authorList>
    </citation>
    <scope>NUCLEOTIDE SEQUENCE [LARGE SCALE GENOMIC DNA]</scope>
    <source>
        <strain>RCB</strain>
    </source>
</reference>
<accession>Q47B76</accession>
<feature type="chain" id="PRO_0000234704" description="Tyrosine--tRNA ligase">
    <location>
        <begin position="1"/>
        <end position="424"/>
    </location>
</feature>
<feature type="domain" description="S4 RNA-binding" evidence="1">
    <location>
        <begin position="357"/>
        <end position="414"/>
    </location>
</feature>
<feature type="short sequence motif" description="'HIGH' region">
    <location>
        <begin position="42"/>
        <end position="51"/>
    </location>
</feature>
<feature type="short sequence motif" description="'KMSKS' region">
    <location>
        <begin position="234"/>
        <end position="238"/>
    </location>
</feature>
<feature type="binding site" evidence="1">
    <location>
        <position position="37"/>
    </location>
    <ligand>
        <name>L-tyrosine</name>
        <dbReference type="ChEBI" id="CHEBI:58315"/>
    </ligand>
</feature>
<feature type="binding site" evidence="1">
    <location>
        <position position="174"/>
    </location>
    <ligand>
        <name>L-tyrosine</name>
        <dbReference type="ChEBI" id="CHEBI:58315"/>
    </ligand>
</feature>
<feature type="binding site" evidence="1">
    <location>
        <position position="178"/>
    </location>
    <ligand>
        <name>L-tyrosine</name>
        <dbReference type="ChEBI" id="CHEBI:58315"/>
    </ligand>
</feature>
<feature type="binding site" evidence="1">
    <location>
        <position position="237"/>
    </location>
    <ligand>
        <name>ATP</name>
        <dbReference type="ChEBI" id="CHEBI:30616"/>
    </ligand>
</feature>
<evidence type="ECO:0000255" key="1">
    <source>
        <dbReference type="HAMAP-Rule" id="MF_02006"/>
    </source>
</evidence>
<keyword id="KW-0030">Aminoacyl-tRNA synthetase</keyword>
<keyword id="KW-0067">ATP-binding</keyword>
<keyword id="KW-0963">Cytoplasm</keyword>
<keyword id="KW-0436">Ligase</keyword>
<keyword id="KW-0547">Nucleotide-binding</keyword>
<keyword id="KW-0648">Protein biosynthesis</keyword>
<keyword id="KW-0694">RNA-binding</keyword>
<organism>
    <name type="scientific">Dechloromonas aromatica (strain RCB)</name>
    <dbReference type="NCBI Taxonomy" id="159087"/>
    <lineage>
        <taxon>Bacteria</taxon>
        <taxon>Pseudomonadati</taxon>
        <taxon>Pseudomonadota</taxon>
        <taxon>Betaproteobacteria</taxon>
        <taxon>Rhodocyclales</taxon>
        <taxon>Azonexaceae</taxon>
        <taxon>Dechloromonas</taxon>
    </lineage>
</organism>
<dbReference type="EC" id="6.1.1.1" evidence="1"/>
<dbReference type="EMBL" id="CP000089">
    <property type="protein sequence ID" value="AAZ47905.1"/>
    <property type="molecule type" value="Genomic_DNA"/>
</dbReference>
<dbReference type="SMR" id="Q47B76"/>
<dbReference type="STRING" id="159087.Daro_3175"/>
<dbReference type="KEGG" id="dar:Daro_3175"/>
<dbReference type="eggNOG" id="COG0162">
    <property type="taxonomic scope" value="Bacteria"/>
</dbReference>
<dbReference type="HOGENOM" id="CLU_024003_0_3_4"/>
<dbReference type="OrthoDB" id="9804243at2"/>
<dbReference type="GO" id="GO:0005829">
    <property type="term" value="C:cytosol"/>
    <property type="evidence" value="ECO:0007669"/>
    <property type="project" value="TreeGrafter"/>
</dbReference>
<dbReference type="GO" id="GO:0005524">
    <property type="term" value="F:ATP binding"/>
    <property type="evidence" value="ECO:0007669"/>
    <property type="project" value="UniProtKB-UniRule"/>
</dbReference>
<dbReference type="GO" id="GO:0003723">
    <property type="term" value="F:RNA binding"/>
    <property type="evidence" value="ECO:0007669"/>
    <property type="project" value="UniProtKB-KW"/>
</dbReference>
<dbReference type="GO" id="GO:0004831">
    <property type="term" value="F:tyrosine-tRNA ligase activity"/>
    <property type="evidence" value="ECO:0007669"/>
    <property type="project" value="UniProtKB-UniRule"/>
</dbReference>
<dbReference type="GO" id="GO:0006437">
    <property type="term" value="P:tyrosyl-tRNA aminoacylation"/>
    <property type="evidence" value="ECO:0007669"/>
    <property type="project" value="UniProtKB-UniRule"/>
</dbReference>
<dbReference type="CDD" id="cd00165">
    <property type="entry name" value="S4"/>
    <property type="match status" value="1"/>
</dbReference>
<dbReference type="CDD" id="cd00805">
    <property type="entry name" value="TyrRS_core"/>
    <property type="match status" value="1"/>
</dbReference>
<dbReference type="FunFam" id="1.10.240.10:FF:000001">
    <property type="entry name" value="Tyrosine--tRNA ligase"/>
    <property type="match status" value="1"/>
</dbReference>
<dbReference type="FunFam" id="3.40.50.620:FF:000008">
    <property type="entry name" value="Tyrosine--tRNA ligase"/>
    <property type="match status" value="1"/>
</dbReference>
<dbReference type="Gene3D" id="3.40.50.620">
    <property type="entry name" value="HUPs"/>
    <property type="match status" value="1"/>
</dbReference>
<dbReference type="Gene3D" id="3.10.290.10">
    <property type="entry name" value="RNA-binding S4 domain"/>
    <property type="match status" value="1"/>
</dbReference>
<dbReference type="Gene3D" id="1.10.240.10">
    <property type="entry name" value="Tyrosyl-Transfer RNA Synthetase"/>
    <property type="match status" value="1"/>
</dbReference>
<dbReference type="HAMAP" id="MF_02006">
    <property type="entry name" value="Tyr_tRNA_synth_type1"/>
    <property type="match status" value="1"/>
</dbReference>
<dbReference type="InterPro" id="IPR001412">
    <property type="entry name" value="aa-tRNA-synth_I_CS"/>
</dbReference>
<dbReference type="InterPro" id="IPR002305">
    <property type="entry name" value="aa-tRNA-synth_Ic"/>
</dbReference>
<dbReference type="InterPro" id="IPR014729">
    <property type="entry name" value="Rossmann-like_a/b/a_fold"/>
</dbReference>
<dbReference type="InterPro" id="IPR002942">
    <property type="entry name" value="S4_RNA-bd"/>
</dbReference>
<dbReference type="InterPro" id="IPR036986">
    <property type="entry name" value="S4_RNA-bd_sf"/>
</dbReference>
<dbReference type="InterPro" id="IPR054608">
    <property type="entry name" value="SYY-like_C"/>
</dbReference>
<dbReference type="InterPro" id="IPR002307">
    <property type="entry name" value="Tyr-tRNA-ligase"/>
</dbReference>
<dbReference type="InterPro" id="IPR024088">
    <property type="entry name" value="Tyr-tRNA-ligase_bac-type"/>
</dbReference>
<dbReference type="InterPro" id="IPR024107">
    <property type="entry name" value="Tyr-tRNA-ligase_bac_1"/>
</dbReference>
<dbReference type="NCBIfam" id="TIGR00234">
    <property type="entry name" value="tyrS"/>
    <property type="match status" value="1"/>
</dbReference>
<dbReference type="PANTHER" id="PTHR11766:SF0">
    <property type="entry name" value="TYROSINE--TRNA LIGASE, MITOCHONDRIAL"/>
    <property type="match status" value="1"/>
</dbReference>
<dbReference type="PANTHER" id="PTHR11766">
    <property type="entry name" value="TYROSYL-TRNA SYNTHETASE"/>
    <property type="match status" value="1"/>
</dbReference>
<dbReference type="Pfam" id="PF22421">
    <property type="entry name" value="SYY_C-terminal"/>
    <property type="match status" value="1"/>
</dbReference>
<dbReference type="Pfam" id="PF00579">
    <property type="entry name" value="tRNA-synt_1b"/>
    <property type="match status" value="1"/>
</dbReference>
<dbReference type="PRINTS" id="PR01040">
    <property type="entry name" value="TRNASYNTHTYR"/>
</dbReference>
<dbReference type="SMART" id="SM00363">
    <property type="entry name" value="S4"/>
    <property type="match status" value="1"/>
</dbReference>
<dbReference type="SUPFAM" id="SSF55174">
    <property type="entry name" value="Alpha-L RNA-binding motif"/>
    <property type="match status" value="1"/>
</dbReference>
<dbReference type="SUPFAM" id="SSF52374">
    <property type="entry name" value="Nucleotidylyl transferase"/>
    <property type="match status" value="1"/>
</dbReference>
<dbReference type="PROSITE" id="PS00178">
    <property type="entry name" value="AA_TRNA_LIGASE_I"/>
    <property type="match status" value="1"/>
</dbReference>
<dbReference type="PROSITE" id="PS50889">
    <property type="entry name" value="S4"/>
    <property type="match status" value="1"/>
</dbReference>